<feature type="chain" id="PRO_0000444755" description="Ionotropic receptor 75a" evidence="5">
    <location>
        <begin position="1"/>
        <end position="629"/>
    </location>
</feature>
<feature type="topological domain" description="Extracellular" evidence="5">
    <location>
        <begin position="1"/>
        <end position="335"/>
    </location>
</feature>
<feature type="transmembrane region" description="Helical" evidence="1">
    <location>
        <begin position="336"/>
        <end position="356"/>
    </location>
</feature>
<feature type="topological domain" description="Cytoplasmic" evidence="5">
    <location>
        <begin position="357"/>
        <end position="374"/>
    </location>
</feature>
<feature type="transmembrane region" description="Helical" evidence="1">
    <location>
        <begin position="375"/>
        <end position="395"/>
    </location>
</feature>
<feature type="topological domain" description="Extracellular" evidence="5">
    <location>
        <begin position="396"/>
        <end position="402"/>
    </location>
</feature>
<feature type="transmembrane region" description="Helical" evidence="1">
    <location>
        <begin position="403"/>
        <end position="423"/>
    </location>
</feature>
<feature type="topological domain" description="Cytoplasmic" evidence="5">
    <location>
        <begin position="424"/>
        <end position="592"/>
    </location>
</feature>
<feature type="transmembrane region" description="Helical" evidence="1">
    <location>
        <begin position="593"/>
        <end position="613"/>
    </location>
</feature>
<feature type="topological domain" description="Extracellular" evidence="5">
    <location>
        <begin position="614"/>
        <end position="629"/>
    </location>
</feature>
<feature type="glycosylation site" description="N-linked (GlcNAc...) asparagine" evidence="2">
    <location>
        <position position="61"/>
    </location>
</feature>
<feature type="glycosylation site" description="N-linked (GlcNAc...) asparagine" evidence="2">
    <location>
        <position position="112"/>
    </location>
</feature>
<feature type="glycosylation site" description="N-linked (GlcNAc...) asparagine" evidence="2">
    <location>
        <position position="126"/>
    </location>
</feature>
<feature type="glycosylation site" description="N-linked (GlcNAc...) asparagine" evidence="2">
    <location>
        <position position="144"/>
    </location>
</feature>
<feature type="glycosylation site" description="N-linked (GlcNAc...) asparagine" evidence="2">
    <location>
        <position position="166"/>
    </location>
</feature>
<feature type="glycosylation site" description="N-linked (GlcNAc...) asparagine" evidence="2">
    <location>
        <position position="232"/>
    </location>
</feature>
<feature type="mutagenesis site" description="Results in a loss of odor-evoked response to acetic acid and a gain of response to butyric acid and 2-oxopentanoic acid; when associated with K-536 and L-538." evidence="4">
    <original>T</original>
    <variation>S</variation>
    <location>
        <position position="289"/>
    </location>
</feature>
<feature type="mutagenesis site" description="Results in a loss of odor-evoked response to acetic acid and a gain of response to butyric acid and 2-oxopentanoic acid; when associated with T-289 and L-538." evidence="4">
    <original>Q</original>
    <variation>K</variation>
    <location>
        <position position="536"/>
    </location>
</feature>
<feature type="mutagenesis site" description="Results in a loss of odor-evoked response to acetic acid and a gain of response to butyric acid and 2-oxopentanoic acid; when associated with T-289 and K-536." evidence="4">
    <original>F</original>
    <variation>L</variation>
    <location>
        <position position="538"/>
    </location>
</feature>
<feature type="sequence conflict" description="In Ref. 1; ADQ74919." evidence="5" ref="1">
    <original>L</original>
    <variation>F</variation>
    <location>
        <position position="60"/>
    </location>
</feature>
<feature type="sequence conflict" description="In Ref. 1; ADQ74919." evidence="5" ref="1">
    <original>S</original>
    <variation>N</variation>
    <location>
        <position position="68"/>
    </location>
</feature>
<feature type="sequence conflict" description="In Ref. 1; ADQ74919." evidence="5" ref="1">
    <original>T</original>
    <variation>A</variation>
    <location>
        <position position="88"/>
    </location>
</feature>
<feature type="sequence conflict" description="In Ref. 1; ADQ74919." evidence="5" ref="1">
    <original>H</original>
    <variation>Y</variation>
    <location>
        <position position="152"/>
    </location>
</feature>
<dbReference type="EMBL" id="HQ612239">
    <property type="protein sequence ID" value="ADQ74919.1"/>
    <property type="molecule type" value="mRNA"/>
</dbReference>
<dbReference type="EMBL" id="KX694388">
    <property type="protein sequence ID" value="APD16193.1"/>
    <property type="molecule type" value="mRNA"/>
</dbReference>
<dbReference type="EMBL" id="AE014296">
    <property type="protein sequence ID" value="AAF49300.2"/>
    <property type="molecule type" value="Genomic_DNA"/>
</dbReference>
<dbReference type="RefSeq" id="NP_649012.2">
    <property type="nucleotide sequence ID" value="NM_140755.3"/>
</dbReference>
<dbReference type="FunCoup" id="Q9VVL1">
    <property type="interactions" value="5"/>
</dbReference>
<dbReference type="STRING" id="7227.FBpp0271900"/>
<dbReference type="GlyCosmos" id="Q9VVL1">
    <property type="glycosylation" value="6 sites, No reported glycans"/>
</dbReference>
<dbReference type="GlyGen" id="Q9VVL1">
    <property type="glycosylation" value="6 sites"/>
</dbReference>
<dbReference type="PaxDb" id="7227-FBpp0271900"/>
<dbReference type="EnsemblMetazoa" id="FBtr0273392">
    <property type="protein sequence ID" value="FBpp0271900"/>
    <property type="gene ID" value="FBgn0036757"/>
</dbReference>
<dbReference type="GeneID" id="39982"/>
<dbReference type="KEGG" id="dme:Dmel_CG14585"/>
<dbReference type="UCSC" id="CG14585-RB">
    <property type="organism name" value="d. melanogaster"/>
</dbReference>
<dbReference type="AGR" id="FB:FBgn0036757"/>
<dbReference type="CTD" id="39982"/>
<dbReference type="FlyBase" id="FBgn0036757">
    <property type="gene designation" value="Ir75a"/>
</dbReference>
<dbReference type="VEuPathDB" id="VectorBase:FBgn0036757"/>
<dbReference type="eggNOG" id="KOG1052">
    <property type="taxonomic scope" value="Eukaryota"/>
</dbReference>
<dbReference type="GeneTree" id="ENSGT00940000171120"/>
<dbReference type="HOGENOM" id="CLU_015993_3_0_1"/>
<dbReference type="InParanoid" id="Q9VVL1"/>
<dbReference type="OMA" id="CWQSDES"/>
<dbReference type="OrthoDB" id="6117597at2759"/>
<dbReference type="PhylomeDB" id="Q9VVL1"/>
<dbReference type="BioGRID-ORCS" id="39982">
    <property type="hits" value="0 hits in 1 CRISPR screen"/>
</dbReference>
<dbReference type="GenomeRNAi" id="39982"/>
<dbReference type="PRO" id="PR:Q9VVL1"/>
<dbReference type="Proteomes" id="UP000000803">
    <property type="component" value="Chromosome 3L"/>
</dbReference>
<dbReference type="Bgee" id="FBgn0036757">
    <property type="expression patterns" value="Expressed in adult olfactory receptor neuron Gr21a/63a (Drosophila) in antenna and 9 other cell types or tissues"/>
</dbReference>
<dbReference type="GO" id="GO:0044297">
    <property type="term" value="C:cell body"/>
    <property type="evidence" value="ECO:0000314"/>
    <property type="project" value="UniProtKB"/>
</dbReference>
<dbReference type="GO" id="GO:0030425">
    <property type="term" value="C:dendrite"/>
    <property type="evidence" value="ECO:0000314"/>
    <property type="project" value="UniProtKB"/>
</dbReference>
<dbReference type="GO" id="GO:0016020">
    <property type="term" value="C:membrane"/>
    <property type="evidence" value="ECO:0000255"/>
    <property type="project" value="FlyBase"/>
</dbReference>
<dbReference type="GO" id="GO:0005886">
    <property type="term" value="C:plasma membrane"/>
    <property type="evidence" value="ECO:0000314"/>
    <property type="project" value="FlyBase"/>
</dbReference>
<dbReference type="GO" id="GO:0071683">
    <property type="term" value="C:sensory dendrite"/>
    <property type="evidence" value="ECO:0000314"/>
    <property type="project" value="FlyBase"/>
</dbReference>
<dbReference type="GO" id="GO:0015276">
    <property type="term" value="F:ligand-gated monoatomic ion channel activity"/>
    <property type="evidence" value="ECO:0000255"/>
    <property type="project" value="FlyBase"/>
</dbReference>
<dbReference type="GO" id="GO:0004984">
    <property type="term" value="F:olfactory receptor activity"/>
    <property type="evidence" value="ECO:0000315"/>
    <property type="project" value="UniProtKB"/>
</dbReference>
<dbReference type="GO" id="GO:0050907">
    <property type="term" value="P:detection of chemical stimulus involved in sensory perception"/>
    <property type="evidence" value="ECO:0000270"/>
    <property type="project" value="FlyBase"/>
</dbReference>
<dbReference type="GO" id="GO:0050911">
    <property type="term" value="P:detection of chemical stimulus involved in sensory perception of smell"/>
    <property type="evidence" value="ECO:0000314"/>
    <property type="project" value="FlyBase"/>
</dbReference>
<dbReference type="GO" id="GO:0007605">
    <property type="term" value="P:sensory perception of sound"/>
    <property type="evidence" value="ECO:0000315"/>
    <property type="project" value="FlyBase"/>
</dbReference>
<dbReference type="FunFam" id="1.10.287.70:FF:000180">
    <property type="entry name" value="Ionotropic receptor 75a"/>
    <property type="match status" value="1"/>
</dbReference>
<dbReference type="Gene3D" id="1.10.287.70">
    <property type="match status" value="1"/>
</dbReference>
<dbReference type="InterPro" id="IPR052192">
    <property type="entry name" value="Insect_Ionotropic_Sensory_Rcpt"/>
</dbReference>
<dbReference type="InterPro" id="IPR001320">
    <property type="entry name" value="Iontro_rcpt_C"/>
</dbReference>
<dbReference type="PANTHER" id="PTHR42643">
    <property type="entry name" value="IONOTROPIC RECEPTOR 20A-RELATED"/>
    <property type="match status" value="1"/>
</dbReference>
<dbReference type="PANTHER" id="PTHR42643:SF32">
    <property type="entry name" value="IONOTROPIC RECEPTOR 31A, ISOFORM C-RELATED"/>
    <property type="match status" value="1"/>
</dbReference>
<dbReference type="Pfam" id="PF24576">
    <property type="entry name" value="IR75A_N"/>
    <property type="match status" value="1"/>
</dbReference>
<dbReference type="Pfam" id="PF00060">
    <property type="entry name" value="Lig_chan"/>
    <property type="match status" value="1"/>
</dbReference>
<dbReference type="SUPFAM" id="SSF53850">
    <property type="entry name" value="Periplasmic binding protein-like II"/>
    <property type="match status" value="1"/>
</dbReference>
<protein>
    <recommendedName>
        <fullName evidence="9">Ionotropic receptor 75a</fullName>
    </recommendedName>
</protein>
<evidence type="ECO:0000255" key="1"/>
<evidence type="ECO:0000255" key="2">
    <source>
        <dbReference type="PROSITE-ProRule" id="PRU00498"/>
    </source>
</evidence>
<evidence type="ECO:0000269" key="3">
    <source>
    </source>
</evidence>
<evidence type="ECO:0000269" key="4">
    <source>
    </source>
</evidence>
<evidence type="ECO:0000305" key="5"/>
<evidence type="ECO:0000305" key="6">
    <source>
    </source>
</evidence>
<evidence type="ECO:0000312" key="7">
    <source>
        <dbReference type="EMBL" id="ADQ74919.1"/>
    </source>
</evidence>
<evidence type="ECO:0000312" key="8">
    <source>
        <dbReference type="EMBL" id="APD16193.1"/>
    </source>
</evidence>
<evidence type="ECO:0000312" key="9">
    <source>
        <dbReference type="FlyBase" id="FBgn0036757"/>
    </source>
</evidence>
<evidence type="ECO:0000312" key="10">
    <source>
        <dbReference type="Proteomes" id="UP000000803"/>
    </source>
</evidence>
<accession>Q9VVL1</accession>
<accession>E7E521</accession>
<keyword id="KW-1003">Cell membrane</keyword>
<keyword id="KW-0966">Cell projection</keyword>
<keyword id="KW-0325">Glycoprotein</keyword>
<keyword id="KW-0472">Membrane</keyword>
<keyword id="KW-0552">Olfaction</keyword>
<keyword id="KW-0675">Receptor</keyword>
<keyword id="KW-1185">Reference proteome</keyword>
<keyword id="KW-0716">Sensory transduction</keyword>
<keyword id="KW-0812">Transmembrane</keyword>
<keyword id="KW-1133">Transmembrane helix</keyword>
<gene>
    <name evidence="9" type="primary">Ir75a</name>
    <name evidence="9" type="ORF">CG14585</name>
</gene>
<reference evidence="7" key="1">
    <citation type="journal article" date="2011" name="Neuron">
        <title>Functional architecture of olfactory ionotropic glutamate receptors.</title>
        <authorList>
            <person name="Abuin L."/>
            <person name="Bargeton B."/>
            <person name="Ulbrich M.H."/>
            <person name="Isacoff E.Y."/>
            <person name="Kellenberger S."/>
            <person name="Benton R."/>
        </authorList>
    </citation>
    <scope>NUCLEOTIDE SEQUENCE [MRNA]</scope>
    <scope>FUNCTION</scope>
    <scope>TISSUE SPECIFICITY</scope>
</reference>
<reference evidence="8" key="2">
    <citation type="journal article" date="2016" name="Nature">
        <title>Olfactory receptor pseudo-pseudogenes.</title>
        <authorList>
            <person name="Prieto-Godino L.L."/>
            <person name="Rytz R."/>
            <person name="Bargeton B."/>
            <person name="Abuin L."/>
            <person name="Arguello J.R."/>
            <person name="Peraro M.D."/>
            <person name="Benton R."/>
        </authorList>
    </citation>
    <scope>NUCLEOTIDE SEQUENCE [MRNA]</scope>
    <scope>FUNCTION</scope>
    <scope>SUBCELLULAR LOCATION</scope>
    <scope>TISSUE SPECIFICITY</scope>
    <scope>DISRUPTION PHENOTYPE</scope>
    <scope>MUTAGENESIS OF THR-289; GLN-536 AND PHE-538</scope>
</reference>
<reference evidence="10" key="3">
    <citation type="journal article" date="2000" name="Science">
        <title>The genome sequence of Drosophila melanogaster.</title>
        <authorList>
            <person name="Adams M.D."/>
            <person name="Celniker S.E."/>
            <person name="Holt R.A."/>
            <person name="Evans C.A."/>
            <person name="Gocayne J.D."/>
            <person name="Amanatides P.G."/>
            <person name="Scherer S.E."/>
            <person name="Li P.W."/>
            <person name="Hoskins R.A."/>
            <person name="Galle R.F."/>
            <person name="George R.A."/>
            <person name="Lewis S.E."/>
            <person name="Richards S."/>
            <person name="Ashburner M."/>
            <person name="Henderson S.N."/>
            <person name="Sutton G.G."/>
            <person name="Wortman J.R."/>
            <person name="Yandell M.D."/>
            <person name="Zhang Q."/>
            <person name="Chen L.X."/>
            <person name="Brandon R.C."/>
            <person name="Rogers Y.-H.C."/>
            <person name="Blazej R.G."/>
            <person name="Champe M."/>
            <person name="Pfeiffer B.D."/>
            <person name="Wan K.H."/>
            <person name="Doyle C."/>
            <person name="Baxter E.G."/>
            <person name="Helt G."/>
            <person name="Nelson C.R."/>
            <person name="Miklos G.L.G."/>
            <person name="Abril J.F."/>
            <person name="Agbayani A."/>
            <person name="An H.-J."/>
            <person name="Andrews-Pfannkoch C."/>
            <person name="Baldwin D."/>
            <person name="Ballew R.M."/>
            <person name="Basu A."/>
            <person name="Baxendale J."/>
            <person name="Bayraktaroglu L."/>
            <person name="Beasley E.M."/>
            <person name="Beeson K.Y."/>
            <person name="Benos P.V."/>
            <person name="Berman B.P."/>
            <person name="Bhandari D."/>
            <person name="Bolshakov S."/>
            <person name="Borkova D."/>
            <person name="Botchan M.R."/>
            <person name="Bouck J."/>
            <person name="Brokstein P."/>
            <person name="Brottier P."/>
            <person name="Burtis K.C."/>
            <person name="Busam D.A."/>
            <person name="Butler H."/>
            <person name="Cadieu E."/>
            <person name="Center A."/>
            <person name="Chandra I."/>
            <person name="Cherry J.M."/>
            <person name="Cawley S."/>
            <person name="Dahlke C."/>
            <person name="Davenport L.B."/>
            <person name="Davies P."/>
            <person name="de Pablos B."/>
            <person name="Delcher A."/>
            <person name="Deng Z."/>
            <person name="Mays A.D."/>
            <person name="Dew I."/>
            <person name="Dietz S.M."/>
            <person name="Dodson K."/>
            <person name="Doup L.E."/>
            <person name="Downes M."/>
            <person name="Dugan-Rocha S."/>
            <person name="Dunkov B.C."/>
            <person name="Dunn P."/>
            <person name="Durbin K.J."/>
            <person name="Evangelista C.C."/>
            <person name="Ferraz C."/>
            <person name="Ferriera S."/>
            <person name="Fleischmann W."/>
            <person name="Fosler C."/>
            <person name="Gabrielian A.E."/>
            <person name="Garg N.S."/>
            <person name="Gelbart W.M."/>
            <person name="Glasser K."/>
            <person name="Glodek A."/>
            <person name="Gong F."/>
            <person name="Gorrell J.H."/>
            <person name="Gu Z."/>
            <person name="Guan P."/>
            <person name="Harris M."/>
            <person name="Harris N.L."/>
            <person name="Harvey D.A."/>
            <person name="Heiman T.J."/>
            <person name="Hernandez J.R."/>
            <person name="Houck J."/>
            <person name="Hostin D."/>
            <person name="Houston K.A."/>
            <person name="Howland T.J."/>
            <person name="Wei M.-H."/>
            <person name="Ibegwam C."/>
            <person name="Jalali M."/>
            <person name="Kalush F."/>
            <person name="Karpen G.H."/>
            <person name="Ke Z."/>
            <person name="Kennison J.A."/>
            <person name="Ketchum K.A."/>
            <person name="Kimmel B.E."/>
            <person name="Kodira C.D."/>
            <person name="Kraft C.L."/>
            <person name="Kravitz S."/>
            <person name="Kulp D."/>
            <person name="Lai Z."/>
            <person name="Lasko P."/>
            <person name="Lei Y."/>
            <person name="Levitsky A.A."/>
            <person name="Li J.H."/>
            <person name="Li Z."/>
            <person name="Liang Y."/>
            <person name="Lin X."/>
            <person name="Liu X."/>
            <person name="Mattei B."/>
            <person name="McIntosh T.C."/>
            <person name="McLeod M.P."/>
            <person name="McPherson D."/>
            <person name="Merkulov G."/>
            <person name="Milshina N.V."/>
            <person name="Mobarry C."/>
            <person name="Morris J."/>
            <person name="Moshrefi A."/>
            <person name="Mount S.M."/>
            <person name="Moy M."/>
            <person name="Murphy B."/>
            <person name="Murphy L."/>
            <person name="Muzny D.M."/>
            <person name="Nelson D.L."/>
            <person name="Nelson D.R."/>
            <person name="Nelson K.A."/>
            <person name="Nixon K."/>
            <person name="Nusskern D.R."/>
            <person name="Pacleb J.M."/>
            <person name="Palazzolo M."/>
            <person name="Pittman G.S."/>
            <person name="Pan S."/>
            <person name="Pollard J."/>
            <person name="Puri V."/>
            <person name="Reese M.G."/>
            <person name="Reinert K."/>
            <person name="Remington K."/>
            <person name="Saunders R.D.C."/>
            <person name="Scheeler F."/>
            <person name="Shen H."/>
            <person name="Shue B.C."/>
            <person name="Siden-Kiamos I."/>
            <person name="Simpson M."/>
            <person name="Skupski M.P."/>
            <person name="Smith T.J."/>
            <person name="Spier E."/>
            <person name="Spradling A.C."/>
            <person name="Stapleton M."/>
            <person name="Strong R."/>
            <person name="Sun E."/>
            <person name="Svirskas R."/>
            <person name="Tector C."/>
            <person name="Turner R."/>
            <person name="Venter E."/>
            <person name="Wang A.H."/>
            <person name="Wang X."/>
            <person name="Wang Z.-Y."/>
            <person name="Wassarman D.A."/>
            <person name="Weinstock G.M."/>
            <person name="Weissenbach J."/>
            <person name="Williams S.M."/>
            <person name="Woodage T."/>
            <person name="Worley K.C."/>
            <person name="Wu D."/>
            <person name="Yang S."/>
            <person name="Yao Q.A."/>
            <person name="Ye J."/>
            <person name="Yeh R.-F."/>
            <person name="Zaveri J.S."/>
            <person name="Zhan M."/>
            <person name="Zhang G."/>
            <person name="Zhao Q."/>
            <person name="Zheng L."/>
            <person name="Zheng X.H."/>
            <person name="Zhong F.N."/>
            <person name="Zhong W."/>
            <person name="Zhou X."/>
            <person name="Zhu S.C."/>
            <person name="Zhu X."/>
            <person name="Smith H.O."/>
            <person name="Gibbs R.A."/>
            <person name="Myers E.W."/>
            <person name="Rubin G.M."/>
            <person name="Venter J.C."/>
        </authorList>
    </citation>
    <scope>NUCLEOTIDE SEQUENCE [LARGE SCALE GENOMIC DNA]</scope>
    <source>
        <strain evidence="10">Berkeley</strain>
    </source>
</reference>
<reference evidence="10" key="4">
    <citation type="journal article" date="2002" name="Genome Biol.">
        <title>Annotation of the Drosophila melanogaster euchromatic genome: a systematic review.</title>
        <authorList>
            <person name="Misra S."/>
            <person name="Crosby M.A."/>
            <person name="Mungall C.J."/>
            <person name="Matthews B.B."/>
            <person name="Campbell K.S."/>
            <person name="Hradecky P."/>
            <person name="Huang Y."/>
            <person name="Kaminker J.S."/>
            <person name="Millburn G.H."/>
            <person name="Prochnik S.E."/>
            <person name="Smith C.D."/>
            <person name="Tupy J.L."/>
            <person name="Whitfield E.J."/>
            <person name="Bayraktaroglu L."/>
            <person name="Berman B.P."/>
            <person name="Bettencourt B.R."/>
            <person name="Celniker S.E."/>
            <person name="de Grey A.D.N.J."/>
            <person name="Drysdale R.A."/>
            <person name="Harris N.L."/>
            <person name="Richter J."/>
            <person name="Russo S."/>
            <person name="Schroeder A.J."/>
            <person name="Shu S.Q."/>
            <person name="Stapleton M."/>
            <person name="Yamada C."/>
            <person name="Ashburner M."/>
            <person name="Gelbart W.M."/>
            <person name="Rubin G.M."/>
            <person name="Lewis S.E."/>
        </authorList>
    </citation>
    <scope>GENOME REANNOTATION</scope>
    <source>
        <strain evidence="10">Berkeley</strain>
    </source>
</reference>
<name>IR75A_DROME</name>
<organism evidence="10">
    <name type="scientific">Drosophila melanogaster</name>
    <name type="common">Fruit fly</name>
    <dbReference type="NCBI Taxonomy" id="7227"/>
    <lineage>
        <taxon>Eukaryota</taxon>
        <taxon>Metazoa</taxon>
        <taxon>Ecdysozoa</taxon>
        <taxon>Arthropoda</taxon>
        <taxon>Hexapoda</taxon>
        <taxon>Insecta</taxon>
        <taxon>Pterygota</taxon>
        <taxon>Neoptera</taxon>
        <taxon>Endopterygota</taxon>
        <taxon>Diptera</taxon>
        <taxon>Brachycera</taxon>
        <taxon>Muscomorpha</taxon>
        <taxon>Ephydroidea</taxon>
        <taxon>Drosophilidae</taxon>
        <taxon>Drosophila</taxon>
        <taxon>Sophophora</taxon>
    </lineage>
</organism>
<sequence>MQLVQLANFVLDNLVQSRIGFIVLFHCWQSDESLKFAQQFMKPIHPILVYHQFVQMRGVLNWSHLELSYMGHTQPTLAIYVDIKCDQTQDLLEEASREQIYNQHYHWLLVGNQSKLEFYDLFGLFNISIDADVSYVKEQIQDNNDSVAYAVHDVYNNGKIIGGQLNVTGSHEMSCDPFVCRRTRHLSSLQKRSKYGNREQLTDVVLRVATVVTQRPLTLSDDELIRFLSQENDTHIDSLARFGFHLTLILRDLLHCKMKFIFSDSWSKSDVVGGSVGAVVDQTADLTATPSLATEGRLKYLSAIIETGFFRSVCIFRTPHNAGLRGDVFLQPFSPLVWYLFGGVLSLIGVLLWITFYMECKRMQKRWRLDYLPSLLSTFLISFGAACIQSSSLIPRSAGGRLIYFALFLISFIMYNYYTSVVVSSLLSSPVKSKIKTMRQLAESSLTVGLEPLPFTKSYLNYSRLPEIHLFIKRKIESQTQNPELWLPAEQGVLRVRDNPGYVYVFETSSGYAYVERYFTAQEICDLNEVLFRPEQLFYTHLHRNSTYKELFRLRFLRILETGVYRKQRSYWVHMKLHCVAQNFVITVGMEYVAPLLLMLICADILVVVILLVELAWKRFFTRHLTFHP</sequence>
<comment type="function">
    <text evidence="3 4">Odorant receptor for acetic and propionic acid. Functions as part of an olfactory receptor complex including the ionotropic receptor coreceptor Ir8a.</text>
</comment>
<comment type="subcellular location">
    <subcellularLocation>
        <location evidence="6">Cell membrane</location>
        <topology evidence="1">Multi-pass membrane protein</topology>
    </subcellularLocation>
    <subcellularLocation>
        <location evidence="4">Cell projection</location>
        <location evidence="4">Dendrite</location>
    </subcellularLocation>
</comment>
<comment type="tissue specificity">
    <text evidence="3 4">Expressed in acetic-acid-sensing neurons in the antennal coeloconic 2 (ac2) and antennal coeloconic 3 (ac3) sensilla class of sensory hairs (at protein level).</text>
</comment>
<comment type="disruption phenotype">
    <text evidence="4">Severely reduced response to acetic and propionic acid.</text>
</comment>
<comment type="similarity">
    <text evidence="5">Belongs to the glutamate-gated ion channel (TC 1.A.10.1) family.</text>
</comment>
<proteinExistence type="evidence at protein level"/>